<evidence type="ECO:0000255" key="1">
    <source>
        <dbReference type="PROSITE-ProRule" id="PRU00388"/>
    </source>
</evidence>
<evidence type="ECO:0000255" key="2">
    <source>
        <dbReference type="PROSITE-ProRule" id="PRU10133"/>
    </source>
</evidence>
<evidence type="ECO:0000269" key="3">
    <source>
    </source>
</evidence>
<evidence type="ECO:0000305" key="4"/>
<reference key="1">
    <citation type="journal article" date="1993" name="Plant Mol. Biol.">
        <title>Functional expression and molecular characterization of AtUBC2-1, a novel ubiquitin-conjugating enzyme (E2) from Arabidopsis thaliana.</title>
        <authorList>
            <person name="Bartling D."/>
            <person name="Rehling P."/>
            <person name="Weiler E.W."/>
        </authorList>
    </citation>
    <scope>NUCLEOTIDE SEQUENCE [MRNA]</scope>
    <scope>FUNCTION</scope>
    <source>
        <strain>cv. Landsberg erecta</strain>
        <tissue>Leaf</tissue>
    </source>
</reference>
<reference key="2">
    <citation type="online journal article" date="1997" name="Plant Gene Register">
        <title>A new family of ubiquitin-conjugating enzymes (E2S) AtUBC15/16/17/18 in Arabidopsis thaliana.</title>
        <authorList>
            <person name="Yan N."/>
            <person name="Doelling J."/>
            <person name="Vierstra R.D."/>
        </authorList>
        <locator>PGR97-174</locator>
    </citation>
    <scope>NUCLEOTIDE SEQUENCE [GENOMIC DNA]</scope>
    <source>
        <strain>cv. Columbia</strain>
    </source>
</reference>
<reference key="3">
    <citation type="journal article" date="2005" name="Plant Physiol.">
        <title>Genome analysis and functional characterization of the E2 and RING-type E3 ligase ubiquitination enzymes of Arabidopsis.</title>
        <authorList>
            <person name="Kraft E."/>
            <person name="Stone S.L."/>
            <person name="Ma L."/>
            <person name="Su N."/>
            <person name="Gao Y."/>
            <person name="Lau O.-S."/>
            <person name="Deng X.-W."/>
            <person name="Callis J."/>
        </authorList>
    </citation>
    <scope>NUCLEOTIDE SEQUENCE [MRNA]</scope>
    <scope>GENE FAMILY</scope>
    <scope>NOMENCLATURE</scope>
</reference>
<reference key="4">
    <citation type="journal article" date="2000" name="Nature">
        <title>Sequence and analysis of chromosome 1 of the plant Arabidopsis thaliana.</title>
        <authorList>
            <person name="Theologis A."/>
            <person name="Ecker J.R."/>
            <person name="Palm C.J."/>
            <person name="Federspiel N.A."/>
            <person name="Kaul S."/>
            <person name="White O."/>
            <person name="Alonso J."/>
            <person name="Altafi H."/>
            <person name="Araujo R."/>
            <person name="Bowman C.L."/>
            <person name="Brooks S.Y."/>
            <person name="Buehler E."/>
            <person name="Chan A."/>
            <person name="Chao Q."/>
            <person name="Chen H."/>
            <person name="Cheuk R.F."/>
            <person name="Chin C.W."/>
            <person name="Chung M.K."/>
            <person name="Conn L."/>
            <person name="Conway A.B."/>
            <person name="Conway A.R."/>
            <person name="Creasy T.H."/>
            <person name="Dewar K."/>
            <person name="Dunn P."/>
            <person name="Etgu P."/>
            <person name="Feldblyum T.V."/>
            <person name="Feng J.-D."/>
            <person name="Fong B."/>
            <person name="Fujii C.Y."/>
            <person name="Gill J.E."/>
            <person name="Goldsmith A.D."/>
            <person name="Haas B."/>
            <person name="Hansen N.F."/>
            <person name="Hughes B."/>
            <person name="Huizar L."/>
            <person name="Hunter J.L."/>
            <person name="Jenkins J."/>
            <person name="Johnson-Hopson C."/>
            <person name="Khan S."/>
            <person name="Khaykin E."/>
            <person name="Kim C.J."/>
            <person name="Koo H.L."/>
            <person name="Kremenetskaia I."/>
            <person name="Kurtz D.B."/>
            <person name="Kwan A."/>
            <person name="Lam B."/>
            <person name="Langin-Hooper S."/>
            <person name="Lee A."/>
            <person name="Lee J.M."/>
            <person name="Lenz C.A."/>
            <person name="Li J.H."/>
            <person name="Li Y.-P."/>
            <person name="Lin X."/>
            <person name="Liu S.X."/>
            <person name="Liu Z.A."/>
            <person name="Luros J.S."/>
            <person name="Maiti R."/>
            <person name="Marziali A."/>
            <person name="Militscher J."/>
            <person name="Miranda M."/>
            <person name="Nguyen M."/>
            <person name="Nierman W.C."/>
            <person name="Osborne B.I."/>
            <person name="Pai G."/>
            <person name="Peterson J."/>
            <person name="Pham P.K."/>
            <person name="Rizzo M."/>
            <person name="Rooney T."/>
            <person name="Rowley D."/>
            <person name="Sakano H."/>
            <person name="Salzberg S.L."/>
            <person name="Schwartz J.R."/>
            <person name="Shinn P."/>
            <person name="Southwick A.M."/>
            <person name="Sun H."/>
            <person name="Tallon L.J."/>
            <person name="Tambunga G."/>
            <person name="Toriumi M.J."/>
            <person name="Town C.D."/>
            <person name="Utterback T."/>
            <person name="Van Aken S."/>
            <person name="Vaysberg M."/>
            <person name="Vysotskaia V.S."/>
            <person name="Walker M."/>
            <person name="Wu D."/>
            <person name="Yu G."/>
            <person name="Fraser C.M."/>
            <person name="Venter J.C."/>
            <person name="Davis R.W."/>
        </authorList>
    </citation>
    <scope>NUCLEOTIDE SEQUENCE [LARGE SCALE GENOMIC DNA]</scope>
    <source>
        <strain>cv. Columbia</strain>
    </source>
</reference>
<reference key="5">
    <citation type="journal article" date="2017" name="Plant J.">
        <title>Araport11: a complete reannotation of the Arabidopsis thaliana reference genome.</title>
        <authorList>
            <person name="Cheng C.Y."/>
            <person name="Krishnakumar V."/>
            <person name="Chan A.P."/>
            <person name="Thibaud-Nissen F."/>
            <person name="Schobel S."/>
            <person name="Town C.D."/>
        </authorList>
    </citation>
    <scope>GENOME REANNOTATION</scope>
    <source>
        <strain>cv. Columbia</strain>
    </source>
</reference>
<reference key="6">
    <citation type="submission" date="2004-09" db="EMBL/GenBank/DDBJ databases">
        <title>Large-scale analysis of RIKEN Arabidopsis full-length (RAFL) cDNAs.</title>
        <authorList>
            <person name="Totoki Y."/>
            <person name="Seki M."/>
            <person name="Ishida J."/>
            <person name="Nakajima M."/>
            <person name="Enju A."/>
            <person name="Kamiya A."/>
            <person name="Narusaka M."/>
            <person name="Shin-i T."/>
            <person name="Nakagawa M."/>
            <person name="Sakamoto N."/>
            <person name="Oishi K."/>
            <person name="Kohara Y."/>
            <person name="Kobayashi M."/>
            <person name="Toyoda A."/>
            <person name="Sakaki Y."/>
            <person name="Sakurai T."/>
            <person name="Iida K."/>
            <person name="Akiyama K."/>
            <person name="Satou M."/>
            <person name="Toyoda T."/>
            <person name="Konagaya A."/>
            <person name="Carninci P."/>
            <person name="Kawai J."/>
            <person name="Hayashizaki Y."/>
            <person name="Shinozaki K."/>
        </authorList>
    </citation>
    <scope>NUCLEOTIDE SEQUENCE [LARGE SCALE MRNA]</scope>
    <source>
        <strain>cv. Columbia</strain>
    </source>
</reference>
<reference key="7">
    <citation type="submission" date="2006-07" db="EMBL/GenBank/DDBJ databases">
        <title>Arabidopsis ORF clones.</title>
        <authorList>
            <person name="Kim C.J."/>
            <person name="Chen H."/>
            <person name="Quinitio C."/>
            <person name="Shinn P."/>
            <person name="Ecker J.R."/>
        </authorList>
    </citation>
    <scope>NUCLEOTIDE SEQUENCE [LARGE SCALE MRNA]</scope>
    <source>
        <strain>cv. Columbia</strain>
    </source>
</reference>
<sequence>MTSSSAPSRKALSKIACNRLQKELSEWQLNPPTGFRHKVTDNLQKWTIDVTGAPGTLYANETYQLQVEFPEHYPMEAPQVVFVSPAPSHPHIYSNGHICLDILYDSWSPAMTVNSVCISILSMLSSSPAKQRPADNDRYVKNCKNGRSPKETRWWFHDDKV</sequence>
<accession>P42743</accession>
<accession>O48952</accession>
<accession>Q67XR1</accession>
<accession>Q9MAK4</accession>
<name>UBC15_ARATH</name>
<comment type="function">
    <text evidence="3">Accepts the ubiquitin from the E1 complex and catalyzes its covalent attachment to other proteins.</text>
</comment>
<comment type="catalytic activity">
    <reaction evidence="1 2">
        <text>S-ubiquitinyl-[E1 ubiquitin-activating enzyme]-L-cysteine + [E2 ubiquitin-conjugating enzyme]-L-cysteine = [E1 ubiquitin-activating enzyme]-L-cysteine + S-ubiquitinyl-[E2 ubiquitin-conjugating enzyme]-L-cysteine.</text>
        <dbReference type="EC" id="2.3.2.23"/>
    </reaction>
</comment>
<comment type="pathway">
    <text evidence="1">Protein modification; protein ubiquitination.</text>
</comment>
<comment type="similarity">
    <text evidence="1">Belongs to the ubiquitin-conjugating enzyme family.</text>
</comment>
<comment type="sequence caution" evidence="4">
    <conflict type="erroneous gene model prediction">
        <sequence resource="EMBL-CDS" id="AAF69157"/>
    </conflict>
</comment>
<gene>
    <name type="primary">UBC15</name>
    <name type="synonym">UBC2-1</name>
    <name type="ordered locus">At1g45050</name>
    <name type="ORF">F27F5.13</name>
</gene>
<feature type="chain" id="PRO_0000082575" description="Ubiquitin-conjugating enzyme 15">
    <location>
        <begin position="1"/>
        <end position="161"/>
    </location>
</feature>
<feature type="domain" description="UBC core" evidence="1">
    <location>
        <begin position="15"/>
        <end position="161"/>
    </location>
</feature>
<feature type="active site" description="Glycyl thioester intermediate" evidence="1 2">
    <location>
        <position position="99"/>
    </location>
</feature>
<feature type="sequence conflict" description="In Ref. 1; CAA48378." evidence="4" ref="1">
    <original>T</original>
    <variation>S</variation>
    <location>
        <position position="33"/>
    </location>
</feature>
<proteinExistence type="evidence at transcript level"/>
<dbReference type="EC" id="2.3.2.23"/>
<dbReference type="EMBL" id="X68306">
    <property type="protein sequence ID" value="CAA48378.1"/>
    <property type="molecule type" value="mRNA"/>
</dbReference>
<dbReference type="EMBL" id="AF028338">
    <property type="protein sequence ID" value="AAC39324.1"/>
    <property type="molecule type" value="Genomic_DNA"/>
</dbReference>
<dbReference type="EMBL" id="DQ027029">
    <property type="protein sequence ID" value="AAY44855.1"/>
    <property type="molecule type" value="mRNA"/>
</dbReference>
<dbReference type="EMBL" id="AC007915">
    <property type="protein sequence ID" value="AAF69157.1"/>
    <property type="status" value="ALT_SEQ"/>
    <property type="molecule type" value="Genomic_DNA"/>
</dbReference>
<dbReference type="EMBL" id="CP002684">
    <property type="protein sequence ID" value="AEE32077.1"/>
    <property type="molecule type" value="Genomic_DNA"/>
</dbReference>
<dbReference type="EMBL" id="BT026105">
    <property type="protein sequence ID" value="ABG48461.1"/>
    <property type="molecule type" value="mRNA"/>
</dbReference>
<dbReference type="EMBL" id="AK176757">
    <property type="protein sequence ID" value="BAD44520.1"/>
    <property type="molecule type" value="mRNA"/>
</dbReference>
<dbReference type="PIR" id="C96509">
    <property type="entry name" value="C96509"/>
</dbReference>
<dbReference type="PIR" id="S39483">
    <property type="entry name" value="S39483"/>
</dbReference>
<dbReference type="SMR" id="P42743"/>
<dbReference type="BioGRID" id="26297">
    <property type="interactions" value="3"/>
</dbReference>
<dbReference type="FunCoup" id="P42743">
    <property type="interactions" value="4133"/>
</dbReference>
<dbReference type="STRING" id="3702.P42743"/>
<dbReference type="PaxDb" id="3702-AT1G45050.1"/>
<dbReference type="ProteomicsDB" id="228715"/>
<dbReference type="EnsemblPlants" id="AT1G45050.1">
    <property type="protein sequence ID" value="AT1G45050.1"/>
    <property type="gene ID" value="AT1G45050"/>
</dbReference>
<dbReference type="GeneID" id="841072"/>
<dbReference type="Gramene" id="AT1G45050.1">
    <property type="protein sequence ID" value="AT1G45050.1"/>
    <property type="gene ID" value="AT1G45050"/>
</dbReference>
<dbReference type="KEGG" id="ath:AT1G45050"/>
<dbReference type="Araport" id="AT1G45050"/>
<dbReference type="TAIR" id="AT1G45050">
    <property type="gene designation" value="ATUBC2-1"/>
</dbReference>
<dbReference type="eggNOG" id="KOG0427">
    <property type="taxonomic scope" value="Eukaryota"/>
</dbReference>
<dbReference type="HOGENOM" id="CLU_030988_15_1_1"/>
<dbReference type="InParanoid" id="P42743"/>
<dbReference type="OMA" id="MERWIIE"/>
<dbReference type="PhylomeDB" id="P42743"/>
<dbReference type="UniPathway" id="UPA00143"/>
<dbReference type="PRO" id="PR:P42743"/>
<dbReference type="Proteomes" id="UP000006548">
    <property type="component" value="Chromosome 1"/>
</dbReference>
<dbReference type="ExpressionAtlas" id="P42743">
    <property type="expression patterns" value="baseline and differential"/>
</dbReference>
<dbReference type="GO" id="GO:0005524">
    <property type="term" value="F:ATP binding"/>
    <property type="evidence" value="ECO:0007669"/>
    <property type="project" value="UniProtKB-KW"/>
</dbReference>
<dbReference type="GO" id="GO:0061631">
    <property type="term" value="F:ubiquitin conjugating enzyme activity"/>
    <property type="evidence" value="ECO:0007669"/>
    <property type="project" value="UniProtKB-EC"/>
</dbReference>
<dbReference type="GO" id="GO:0004842">
    <property type="term" value="F:ubiquitin-protein transferase activity"/>
    <property type="evidence" value="ECO:0000314"/>
    <property type="project" value="TAIR"/>
</dbReference>
<dbReference type="GO" id="GO:0016567">
    <property type="term" value="P:protein ubiquitination"/>
    <property type="evidence" value="ECO:0007669"/>
    <property type="project" value="UniProtKB-UniPathway"/>
</dbReference>
<dbReference type="GO" id="GO:0006511">
    <property type="term" value="P:ubiquitin-dependent protein catabolic process"/>
    <property type="evidence" value="ECO:0000314"/>
    <property type="project" value="TAIR"/>
</dbReference>
<dbReference type="CDD" id="cd23808">
    <property type="entry name" value="UBCc_UBE2W"/>
    <property type="match status" value="1"/>
</dbReference>
<dbReference type="FunFam" id="3.10.110.10:FF:000032">
    <property type="entry name" value="probable ubiquitin-conjugating enzyme E2 16"/>
    <property type="match status" value="1"/>
</dbReference>
<dbReference type="Gene3D" id="3.10.110.10">
    <property type="entry name" value="Ubiquitin Conjugating Enzyme"/>
    <property type="match status" value="1"/>
</dbReference>
<dbReference type="InterPro" id="IPR050113">
    <property type="entry name" value="Ub_conjugating_enzyme"/>
</dbReference>
<dbReference type="InterPro" id="IPR000608">
    <property type="entry name" value="UBQ-conjugat_E2_core"/>
</dbReference>
<dbReference type="InterPro" id="IPR023313">
    <property type="entry name" value="UBQ-conjugating_AS"/>
</dbReference>
<dbReference type="InterPro" id="IPR016135">
    <property type="entry name" value="UBQ-conjugating_enzyme/RWD"/>
</dbReference>
<dbReference type="PANTHER" id="PTHR24067">
    <property type="entry name" value="UBIQUITIN-CONJUGATING ENZYME E2"/>
    <property type="match status" value="1"/>
</dbReference>
<dbReference type="Pfam" id="PF00179">
    <property type="entry name" value="UQ_con"/>
    <property type="match status" value="1"/>
</dbReference>
<dbReference type="SMART" id="SM00212">
    <property type="entry name" value="UBCc"/>
    <property type="match status" value="1"/>
</dbReference>
<dbReference type="SUPFAM" id="SSF54495">
    <property type="entry name" value="UBC-like"/>
    <property type="match status" value="1"/>
</dbReference>
<dbReference type="PROSITE" id="PS00183">
    <property type="entry name" value="UBC_1"/>
    <property type="match status" value="1"/>
</dbReference>
<dbReference type="PROSITE" id="PS50127">
    <property type="entry name" value="UBC_2"/>
    <property type="match status" value="1"/>
</dbReference>
<organism>
    <name type="scientific">Arabidopsis thaliana</name>
    <name type="common">Mouse-ear cress</name>
    <dbReference type="NCBI Taxonomy" id="3702"/>
    <lineage>
        <taxon>Eukaryota</taxon>
        <taxon>Viridiplantae</taxon>
        <taxon>Streptophyta</taxon>
        <taxon>Embryophyta</taxon>
        <taxon>Tracheophyta</taxon>
        <taxon>Spermatophyta</taxon>
        <taxon>Magnoliopsida</taxon>
        <taxon>eudicotyledons</taxon>
        <taxon>Gunneridae</taxon>
        <taxon>Pentapetalae</taxon>
        <taxon>rosids</taxon>
        <taxon>malvids</taxon>
        <taxon>Brassicales</taxon>
        <taxon>Brassicaceae</taxon>
        <taxon>Camelineae</taxon>
        <taxon>Arabidopsis</taxon>
    </lineage>
</organism>
<keyword id="KW-0067">ATP-binding</keyword>
<keyword id="KW-0547">Nucleotide-binding</keyword>
<keyword id="KW-1185">Reference proteome</keyword>
<keyword id="KW-0808">Transferase</keyword>
<keyword id="KW-0833">Ubl conjugation pathway</keyword>
<protein>
    <recommendedName>
        <fullName>Ubiquitin-conjugating enzyme 15</fullName>
        <ecNumber>2.3.2.23</ecNumber>
    </recommendedName>
    <alternativeName>
        <fullName>E2 ubiquitin-conjugating enzyme 15</fullName>
    </alternativeName>
    <alternativeName>
        <fullName>PM42</fullName>
    </alternativeName>
    <alternativeName>
        <fullName>Ubiquitin carrier protein</fullName>
    </alternativeName>
    <alternativeName>
        <fullName>Ubiquitin-conjugating enzyme E2-18 kDa 15</fullName>
    </alternativeName>
    <alternativeName>
        <fullName>Ubiquitin-protein ligase</fullName>
    </alternativeName>
</protein>